<organism>
    <name type="scientific">Xenopus tropicalis</name>
    <name type="common">Western clawed frog</name>
    <name type="synonym">Silurana tropicalis</name>
    <dbReference type="NCBI Taxonomy" id="8364"/>
    <lineage>
        <taxon>Eukaryota</taxon>
        <taxon>Metazoa</taxon>
        <taxon>Chordata</taxon>
        <taxon>Craniata</taxon>
        <taxon>Vertebrata</taxon>
        <taxon>Euteleostomi</taxon>
        <taxon>Amphibia</taxon>
        <taxon>Batrachia</taxon>
        <taxon>Anura</taxon>
        <taxon>Pipoidea</taxon>
        <taxon>Pipidae</taxon>
        <taxon>Xenopodinae</taxon>
        <taxon>Xenopus</taxon>
        <taxon>Silurana</taxon>
    </lineage>
</organism>
<comment type="function">
    <text evidence="1">Cell surface proteoglycan that bears heparan sulfate.</text>
</comment>
<comment type="subcellular location">
    <subcellularLocation>
        <location evidence="1">Cell membrane</location>
        <topology evidence="1">Lipid-anchor</topology>
        <topology evidence="1">GPI-anchor</topology>
    </subcellularLocation>
</comment>
<comment type="subcellular location">
    <molecule>Secreted glypican-1</molecule>
    <subcellularLocation>
        <location evidence="1">Secreted</location>
        <location evidence="1">Extracellular space</location>
    </subcellularLocation>
</comment>
<comment type="PTM">
    <text evidence="1">O-glycosylated with heparan sulfate side chains.</text>
</comment>
<comment type="similarity">
    <text evidence="4">Belongs to the glypican family.</text>
</comment>
<reference key="1">
    <citation type="journal article" date="2010" name="Science">
        <title>The genome of the Western clawed frog Xenopus tropicalis.</title>
        <authorList>
            <person name="Hellsten U."/>
            <person name="Harland R.M."/>
            <person name="Gilchrist M.J."/>
            <person name="Hendrix D."/>
            <person name="Jurka J."/>
            <person name="Kapitonov V."/>
            <person name="Ovcharenko I."/>
            <person name="Putnam N.H."/>
            <person name="Shu S."/>
            <person name="Taher L."/>
            <person name="Blitz I.L."/>
            <person name="Blumberg B."/>
            <person name="Dichmann D.S."/>
            <person name="Dubchak I."/>
            <person name="Amaya E."/>
            <person name="Detter J.C."/>
            <person name="Fletcher R."/>
            <person name="Gerhard D.S."/>
            <person name="Goodstein D."/>
            <person name="Graves T."/>
            <person name="Grigoriev I.V."/>
            <person name="Grimwood J."/>
            <person name="Kawashima T."/>
            <person name="Lindquist E."/>
            <person name="Lucas S.M."/>
            <person name="Mead P.E."/>
            <person name="Mitros T."/>
            <person name="Ogino H."/>
            <person name="Ohta Y."/>
            <person name="Poliakov A.V."/>
            <person name="Pollet N."/>
            <person name="Robert J."/>
            <person name="Salamov A."/>
            <person name="Sater A.K."/>
            <person name="Schmutz J."/>
            <person name="Terry A."/>
            <person name="Vize P.D."/>
            <person name="Warren W.C."/>
            <person name="Wells D."/>
            <person name="Wills A."/>
            <person name="Wilson R.K."/>
            <person name="Zimmerman L.B."/>
            <person name="Zorn A.M."/>
            <person name="Grainger R."/>
            <person name="Grammer T."/>
            <person name="Khokha M.K."/>
            <person name="Richardson P.M."/>
            <person name="Rokhsar D.S."/>
        </authorList>
    </citation>
    <scope>NUCLEOTIDE SEQUENCE [LARGE SCALE GENOMIC DNA]</scope>
</reference>
<reference key="2">
    <citation type="submission" date="2006-08" db="EMBL/GenBank/DDBJ databases">
        <authorList>
            <consortium name="NIH - Xenopus Gene Collection (XGC) project"/>
        </authorList>
    </citation>
    <scope>NUCLEOTIDE SEQUENCE [LARGE SCALE MRNA]</scope>
    <source>
        <tissue>Brain</tissue>
    </source>
</reference>
<name>GPC1_XENTR</name>
<feature type="signal peptide" evidence="2">
    <location>
        <begin position="1"/>
        <end position="21"/>
    </location>
</feature>
<feature type="chain" id="PRO_0000417510" description="Glypican-1">
    <location>
        <begin position="22"/>
        <end status="unknown"/>
    </location>
</feature>
<feature type="chain" id="PRO_0000417511" description="Secreted glypican-1">
    <location>
        <begin position="22"/>
        <end status="unknown"/>
    </location>
</feature>
<feature type="propeptide" id="PRO_0000417512" description="Removed in mature form" evidence="2">
    <location>
        <begin status="unknown"/>
        <end position="554"/>
    </location>
</feature>
<feature type="region of interest" description="Disordered" evidence="3">
    <location>
        <begin position="346"/>
        <end position="369"/>
    </location>
</feature>
<feature type="compositionally biased region" description="Basic and acidic residues" evidence="3">
    <location>
        <begin position="353"/>
        <end position="369"/>
    </location>
</feature>
<feature type="glycosylation site" description="N-linked (GlcNAc...) asparagine" evidence="2">
    <location>
        <position position="79"/>
    </location>
</feature>
<feature type="glycosylation site" description="N-linked (GlcNAc...) asparagine" evidence="2">
    <location>
        <position position="116"/>
    </location>
</feature>
<feature type="glycosylation site" description="O-linked (Xyl...) (heparan sulfate) serine" evidence="2">
    <location>
        <position position="486"/>
    </location>
</feature>
<feature type="glycosylation site" description="O-linked (Xyl...) (heparan sulfate) serine" evidence="2">
    <location>
        <position position="488"/>
    </location>
</feature>
<feature type="glycosylation site" description="O-linked (Xyl...) (heparan sulfate) serine" evidence="2">
    <location>
        <position position="490"/>
    </location>
</feature>
<feature type="disulfide bond" evidence="1">
    <location>
        <begin position="32"/>
        <end position="68"/>
    </location>
</feature>
<feature type="disulfide bond" evidence="1">
    <location>
        <begin position="62"/>
        <end position="256"/>
    </location>
</feature>
<feature type="disulfide bond" evidence="1">
    <location>
        <begin position="69"/>
        <end position="259"/>
    </location>
</feature>
<feature type="disulfide bond" evidence="1">
    <location>
        <begin position="191"/>
        <end position="343"/>
    </location>
</feature>
<feature type="disulfide bond" evidence="1">
    <location>
        <begin position="246"/>
        <end position="279"/>
    </location>
</feature>
<feature type="disulfide bond" evidence="1">
    <location>
        <begin position="268"/>
        <end position="415"/>
    </location>
</feature>
<feature type="disulfide bond" evidence="1">
    <location>
        <begin position="272"/>
        <end position="401"/>
    </location>
</feature>
<accession>Q0V9W0</accession>
<protein>
    <recommendedName>
        <fullName>Glypican-1</fullName>
    </recommendedName>
    <component>
        <recommendedName>
            <fullName>Secreted glypican-1</fullName>
        </recommendedName>
    </component>
</protein>
<proteinExistence type="evidence at transcript level"/>
<evidence type="ECO:0000250" key="1"/>
<evidence type="ECO:0000255" key="2"/>
<evidence type="ECO:0000256" key="3">
    <source>
        <dbReference type="SAM" id="MobiDB-lite"/>
    </source>
</evidence>
<evidence type="ECO:0000305" key="4"/>
<keyword id="KW-1003">Cell membrane</keyword>
<keyword id="KW-1015">Disulfide bond</keyword>
<keyword id="KW-0325">Glycoprotein</keyword>
<keyword id="KW-0336">GPI-anchor</keyword>
<keyword id="KW-0357">Heparan sulfate</keyword>
<keyword id="KW-0449">Lipoprotein</keyword>
<keyword id="KW-0472">Membrane</keyword>
<keyword id="KW-0654">Proteoglycan</keyword>
<keyword id="KW-1185">Reference proteome</keyword>
<keyword id="KW-0964">Secreted</keyword>
<keyword id="KW-0732">Signal</keyword>
<sequence length="554" mass="62450">MERLCWGWWWHLGILCLMHWAAGDTGSKTKSCSEVKQVYLAKGFSLNGAPQSEISGEHLRICPQGYTCCTSEMEENFANISRVEFEAKLRESSASIQRLLTTQHRNFDSYFQDLLNTSERVLQERFPSQYGDLYSQNSKIFRDLYSELRQYYRGSGINLEEALIEFWSRLLERVFKAQHTQYSFSEEYMDCLVKQYEQLKPFGDTPREVKLKAARAFIAARSFVQGLNAAADVVRKANQVPMSTECARAVMKLVYCPHCRGHSSIKLCSNYCWNVMRGCLANQADLDSEWRNLIESLLLVADKFNGASNVENIVGAIHTKISEAITHMQENKELLTNKVFKICGTPKKTNKGSKSEERRRKGKATQEDKSAVATMDNLISDVKGILSDIQDYWVSLPSLFCTEKVTAGPGNEDKCWNGITKGRYMPEPMGSGLANQINNPEVDVDITKPDMTIRQQIMQLKIMTSRLRNAYNGNDVDFQDTSDDMSGSGSGDGCNEDLCGSGRKLSRETVIIQPATHAVPRQPNPGETGKGTRLSSWDLLICLVALLVAQCTRW</sequence>
<dbReference type="EMBL" id="AAMC01022256">
    <property type="status" value="NOT_ANNOTATED_CDS"/>
    <property type="molecule type" value="Genomic_DNA"/>
</dbReference>
<dbReference type="EMBL" id="AAMC01022257">
    <property type="status" value="NOT_ANNOTATED_CDS"/>
    <property type="molecule type" value="Genomic_DNA"/>
</dbReference>
<dbReference type="EMBL" id="BC121374">
    <property type="protein sequence ID" value="AAI21375.1"/>
    <property type="molecule type" value="mRNA"/>
</dbReference>
<dbReference type="RefSeq" id="NP_001072316.1">
    <property type="nucleotide sequence ID" value="NM_001078848.1"/>
</dbReference>
<dbReference type="SMR" id="Q0V9W0"/>
<dbReference type="FunCoup" id="Q0V9W0">
    <property type="interactions" value="600"/>
</dbReference>
<dbReference type="STRING" id="8364.ENSXETP00000029435"/>
<dbReference type="GlyCosmos" id="Q0V9W0">
    <property type="glycosylation" value="5 sites, No reported glycans"/>
</dbReference>
<dbReference type="PaxDb" id="8364-ENSXETP00000006591"/>
<dbReference type="DNASU" id="779769"/>
<dbReference type="GeneID" id="779769"/>
<dbReference type="KEGG" id="xtr:779769"/>
<dbReference type="AGR" id="Xenbase:XB-GENE-964661"/>
<dbReference type="CTD" id="2817"/>
<dbReference type="Xenbase" id="XB-GENE-964661">
    <property type="gene designation" value="gpc1"/>
</dbReference>
<dbReference type="eggNOG" id="KOG3821">
    <property type="taxonomic scope" value="Eukaryota"/>
</dbReference>
<dbReference type="HOGENOM" id="CLU_024658_2_0_1"/>
<dbReference type="InParanoid" id="Q0V9W0"/>
<dbReference type="OMA" id="ECTKALM"/>
<dbReference type="OrthoDB" id="10010764at2759"/>
<dbReference type="PhylomeDB" id="Q0V9W0"/>
<dbReference type="TreeFam" id="TF105317"/>
<dbReference type="Reactome" id="R-XTR-1971475">
    <property type="pathway name" value="A tetrasaccharide linker sequence is required for GAG synthesis"/>
</dbReference>
<dbReference type="Reactome" id="R-XTR-2022928">
    <property type="pathway name" value="HS-GAG biosynthesis"/>
</dbReference>
<dbReference type="Reactome" id="R-XTR-2024096">
    <property type="pathway name" value="HS-GAG degradation"/>
</dbReference>
<dbReference type="Reactome" id="R-XTR-202733">
    <property type="pathway name" value="Cell surface interactions at the vascular wall"/>
</dbReference>
<dbReference type="Proteomes" id="UP000008143">
    <property type="component" value="Chromosome 5"/>
</dbReference>
<dbReference type="Bgee" id="ENSXETG00000003037">
    <property type="expression patterns" value="Expressed in testis and 9 other cell types or tissues"/>
</dbReference>
<dbReference type="ExpressionAtlas" id="Q0V9W0">
    <property type="expression patterns" value="baseline"/>
</dbReference>
<dbReference type="GO" id="GO:0005576">
    <property type="term" value="C:extracellular region"/>
    <property type="evidence" value="ECO:0007669"/>
    <property type="project" value="UniProtKB-SubCell"/>
</dbReference>
<dbReference type="GO" id="GO:0005886">
    <property type="term" value="C:plasma membrane"/>
    <property type="evidence" value="ECO:0007669"/>
    <property type="project" value="UniProtKB-SubCell"/>
</dbReference>
<dbReference type="GO" id="GO:0098552">
    <property type="term" value="C:side of membrane"/>
    <property type="evidence" value="ECO:0007669"/>
    <property type="project" value="UniProtKB-KW"/>
</dbReference>
<dbReference type="GO" id="GO:0009966">
    <property type="term" value="P:regulation of signal transduction"/>
    <property type="evidence" value="ECO:0007669"/>
    <property type="project" value="InterPro"/>
</dbReference>
<dbReference type="InterPro" id="IPR001863">
    <property type="entry name" value="Glypican"/>
</dbReference>
<dbReference type="PANTHER" id="PTHR10822">
    <property type="entry name" value="GLYPICAN"/>
    <property type="match status" value="1"/>
</dbReference>
<dbReference type="PANTHER" id="PTHR10822:SF8">
    <property type="entry name" value="GLYPICAN-1"/>
    <property type="match status" value="1"/>
</dbReference>
<dbReference type="Pfam" id="PF01153">
    <property type="entry name" value="Glypican"/>
    <property type="match status" value="1"/>
</dbReference>
<gene>
    <name type="primary">gpc1</name>
</gene>